<sequence length="193" mass="21452">MANMKNSNDRIILFRKAGEKVDATKMLFLTEYGLSHEADTDTEDTMDGSYNTGGSVESTMSGTAKMFYGDDFADEIEDAVVDRVLYEAWEVESRIPGKNGDATKFKAKYFQGFHNKFELKAEANGIDEYEYEYGVNGRFQRGFATLPEAVTKKLKATGYRFHDTTKADALTGEDLTAIPQPKVDSSTVTPGEV</sequence>
<reference evidence="2 3" key="1">
    <citation type="submission" date="2007-12" db="EMBL/GenBank/DDBJ databases">
        <title>Characterization of two staphylococcal bacteriophage.</title>
        <authorList>
            <person name="Hoshiba H."/>
            <person name="Uchiyama J."/>
            <person name="Rashel M."/>
            <person name="Maeda Y."/>
            <person name="Takemura I."/>
            <person name="Sugihara Y."/>
            <person name="Muraoka A."/>
            <person name="Matsuzaki S."/>
        </authorList>
    </citation>
    <scope>NUCLEOTIDE SEQUENCE [GENOMIC DNA]</scope>
</reference>
<reference evidence="2 3" key="2">
    <citation type="submission" date="2009-06" db="UniProtKB">
        <authorList>
            <person name="Hoshiba H."/>
            <person name="Uchiyama J."/>
            <person name="Ujihara T."/>
            <person name="Wakiguchi H."/>
            <person name="Matsuzaki S."/>
        </authorList>
    </citation>
    <scope>PROTEIN SEQUENCE OF 2-21</scope>
</reference>
<proteinExistence type="evidence at protein level"/>
<protein>
    <recommendedName>
        <fullName>Putative tail protein</fullName>
    </recommendedName>
    <alternativeName>
        <fullName evidence="3">Putative major tail protein</fullName>
    </alternativeName>
</protein>
<dbReference type="EMBL" id="AB370205">
    <property type="protein sequence ID" value="BAG48150.1"/>
    <property type="molecule type" value="Genomic_DNA"/>
</dbReference>
<dbReference type="RefSeq" id="YP_001949851.1">
    <property type="nucleotide sequence ID" value="NC_010808.1"/>
</dbReference>
<dbReference type="SMR" id="B2ZYZ1"/>
<dbReference type="GeneID" id="6370094"/>
<dbReference type="KEGG" id="vg:6370094"/>
<dbReference type="OrthoDB" id="8710at10239"/>
<dbReference type="Proteomes" id="UP000002423">
    <property type="component" value="Segment"/>
</dbReference>
<dbReference type="GO" id="GO:0098015">
    <property type="term" value="C:virus tail"/>
    <property type="evidence" value="ECO:0007669"/>
    <property type="project" value="UniProtKB-KW"/>
</dbReference>
<dbReference type="InterPro" id="IPR022345">
    <property type="entry name" value="Phage_69_Orf23_MTP"/>
</dbReference>
<dbReference type="InterPro" id="IPR011855">
    <property type="entry name" value="Phgtail_TP901_1"/>
</dbReference>
<dbReference type="NCBIfam" id="TIGR02126">
    <property type="entry name" value="phgtail_TP901_1"/>
    <property type="match status" value="1"/>
</dbReference>
<dbReference type="Pfam" id="PF06199">
    <property type="entry name" value="Phage_tail_2"/>
    <property type="match status" value="1"/>
</dbReference>
<dbReference type="PRINTS" id="PR01997">
    <property type="entry name" value="MTP2FAMILY"/>
</dbReference>
<dbReference type="PRINTS" id="PR01998">
    <property type="entry name" value="MTP2STAPHYLO"/>
</dbReference>
<comment type="subcellular location">
    <subcellularLocation>
        <location evidence="2">Virion</location>
    </subcellularLocation>
</comment>
<name>TAIL_BPMR2</name>
<accession>B2ZYZ1</accession>
<evidence type="ECO:0000269" key="1">
    <source ref="2"/>
</evidence>
<evidence type="ECO:0000305" key="2"/>
<evidence type="ECO:0000312" key="3">
    <source>
        <dbReference type="EMBL" id="BAG48150.1"/>
    </source>
</evidence>
<keyword id="KW-0903">Direct protein sequencing</keyword>
<keyword id="KW-1185">Reference proteome</keyword>
<keyword id="KW-1227">Viral tail protein</keyword>
<keyword id="KW-0946">Virion</keyword>
<organism>
    <name type="scientific">Staphylococcus phage phiMR25</name>
    <dbReference type="NCBI Taxonomy" id="487152"/>
    <lineage>
        <taxon>Viruses</taxon>
        <taxon>Duplodnaviria</taxon>
        <taxon>Heunggongvirae</taxon>
        <taxon>Uroviricota</taxon>
        <taxon>Caudoviricetes</taxon>
        <taxon>Azeredovirinae</taxon>
        <taxon>Dubowvirus</taxon>
    </lineage>
</organism>
<organismHost>
    <name type="scientific">Staphylococcus aureus</name>
    <dbReference type="NCBI Taxonomy" id="1280"/>
</organismHost>
<feature type="initiator methionine" description="Removed" evidence="1">
    <location>
        <position position="1"/>
    </location>
</feature>
<feature type="chain" id="PRO_0000383666" description="Putative tail protein">
    <location>
        <begin position="2"/>
        <end position="193"/>
    </location>
</feature>
<gene>
    <name evidence="3" type="primary">orf53</name>
</gene>